<keyword id="KW-0066">ATP synthesis</keyword>
<keyword id="KW-0997">Cell inner membrane</keyword>
<keyword id="KW-1003">Cell membrane</keyword>
<keyword id="KW-0139">CF(1)</keyword>
<keyword id="KW-0375">Hydrogen ion transport</keyword>
<keyword id="KW-0406">Ion transport</keyword>
<keyword id="KW-0472">Membrane</keyword>
<keyword id="KW-0813">Transport</keyword>
<dbReference type="EMBL" id="CP001233">
    <property type="protein sequence ID" value="ACP06979.1"/>
    <property type="molecule type" value="Genomic_DNA"/>
</dbReference>
<dbReference type="RefSeq" id="WP_001281808.1">
    <property type="nucleotide sequence ID" value="NC_012578.1"/>
</dbReference>
<dbReference type="SMR" id="C3LSJ2"/>
<dbReference type="GeneID" id="69721151"/>
<dbReference type="KEGG" id="vcm:VCM66_2687"/>
<dbReference type="HOGENOM" id="CLU_085114_3_0_6"/>
<dbReference type="Proteomes" id="UP000001217">
    <property type="component" value="Chromosome I"/>
</dbReference>
<dbReference type="GO" id="GO:0005886">
    <property type="term" value="C:plasma membrane"/>
    <property type="evidence" value="ECO:0007669"/>
    <property type="project" value="UniProtKB-SubCell"/>
</dbReference>
<dbReference type="GO" id="GO:0045259">
    <property type="term" value="C:proton-transporting ATP synthase complex"/>
    <property type="evidence" value="ECO:0007669"/>
    <property type="project" value="UniProtKB-KW"/>
</dbReference>
<dbReference type="GO" id="GO:0046933">
    <property type="term" value="F:proton-transporting ATP synthase activity, rotational mechanism"/>
    <property type="evidence" value="ECO:0007669"/>
    <property type="project" value="UniProtKB-UniRule"/>
</dbReference>
<dbReference type="Gene3D" id="1.10.520.20">
    <property type="entry name" value="N-terminal domain of the delta subunit of the F1F0-ATP synthase"/>
    <property type="match status" value="1"/>
</dbReference>
<dbReference type="HAMAP" id="MF_01416">
    <property type="entry name" value="ATP_synth_delta_bact"/>
    <property type="match status" value="1"/>
</dbReference>
<dbReference type="InterPro" id="IPR026015">
    <property type="entry name" value="ATP_synth_OSCP/delta_N_sf"/>
</dbReference>
<dbReference type="InterPro" id="IPR020781">
    <property type="entry name" value="ATPase_OSCP/d_CS"/>
</dbReference>
<dbReference type="InterPro" id="IPR000711">
    <property type="entry name" value="ATPase_OSCP/dsu"/>
</dbReference>
<dbReference type="NCBIfam" id="TIGR01145">
    <property type="entry name" value="ATP_synt_delta"/>
    <property type="match status" value="1"/>
</dbReference>
<dbReference type="NCBIfam" id="NF004402">
    <property type="entry name" value="PRK05758.2-2"/>
    <property type="match status" value="1"/>
</dbReference>
<dbReference type="NCBIfam" id="NF004404">
    <property type="entry name" value="PRK05758.2-5"/>
    <property type="match status" value="1"/>
</dbReference>
<dbReference type="PANTHER" id="PTHR11910">
    <property type="entry name" value="ATP SYNTHASE DELTA CHAIN"/>
    <property type="match status" value="1"/>
</dbReference>
<dbReference type="Pfam" id="PF00213">
    <property type="entry name" value="OSCP"/>
    <property type="match status" value="1"/>
</dbReference>
<dbReference type="PRINTS" id="PR00125">
    <property type="entry name" value="ATPASEDELTA"/>
</dbReference>
<dbReference type="SUPFAM" id="SSF47928">
    <property type="entry name" value="N-terminal domain of the delta subunit of the F1F0-ATP synthase"/>
    <property type="match status" value="1"/>
</dbReference>
<dbReference type="PROSITE" id="PS00389">
    <property type="entry name" value="ATPASE_DELTA"/>
    <property type="match status" value="1"/>
</dbReference>
<gene>
    <name evidence="1" type="primary">atpH</name>
    <name type="ordered locus">VCM66_2687</name>
</gene>
<protein>
    <recommendedName>
        <fullName evidence="1">ATP synthase subunit delta</fullName>
    </recommendedName>
    <alternativeName>
        <fullName evidence="1">ATP synthase F(1) sector subunit delta</fullName>
    </alternativeName>
    <alternativeName>
        <fullName evidence="1">F-type ATPase subunit delta</fullName>
        <shortName evidence="1">F-ATPase subunit delta</shortName>
    </alternativeName>
</protein>
<comment type="function">
    <text evidence="1">F(1)F(0) ATP synthase produces ATP from ADP in the presence of a proton or sodium gradient. F-type ATPases consist of two structural domains, F(1) containing the extramembraneous catalytic core and F(0) containing the membrane proton channel, linked together by a central stalk and a peripheral stalk. During catalysis, ATP synthesis in the catalytic domain of F(1) is coupled via a rotary mechanism of the central stalk subunits to proton translocation.</text>
</comment>
<comment type="function">
    <text evidence="1">This protein is part of the stalk that links CF(0) to CF(1). It either transmits conformational changes from CF(0) to CF(1) or is implicated in proton conduction.</text>
</comment>
<comment type="subunit">
    <text evidence="1">F-type ATPases have 2 components, F(1) - the catalytic core - and F(0) - the membrane proton channel. F(1) has five subunits: alpha(3), beta(3), gamma(1), delta(1), epsilon(1). F(0) has three main subunits: a(1), b(2) and c(10-14). The alpha and beta chains form an alternating ring which encloses part of the gamma chain. F(1) is attached to F(0) by a central stalk formed by the gamma and epsilon chains, while a peripheral stalk is formed by the delta and b chains.</text>
</comment>
<comment type="subcellular location">
    <subcellularLocation>
        <location evidence="1">Cell inner membrane</location>
        <topology evidence="1">Peripheral membrane protein</topology>
    </subcellularLocation>
</comment>
<comment type="similarity">
    <text evidence="1">Belongs to the ATPase delta chain family.</text>
</comment>
<reference key="1">
    <citation type="journal article" date="2008" name="PLoS ONE">
        <title>A recalibrated molecular clock and independent origins for the cholera pandemic clones.</title>
        <authorList>
            <person name="Feng L."/>
            <person name="Reeves P.R."/>
            <person name="Lan R."/>
            <person name="Ren Y."/>
            <person name="Gao C."/>
            <person name="Zhou Z."/>
            <person name="Ren Y."/>
            <person name="Cheng J."/>
            <person name="Wang W."/>
            <person name="Wang J."/>
            <person name="Qian W."/>
            <person name="Li D."/>
            <person name="Wang L."/>
        </authorList>
    </citation>
    <scope>NUCLEOTIDE SEQUENCE [LARGE SCALE GENOMIC DNA]</scope>
    <source>
        <strain>M66-2</strain>
    </source>
</reference>
<organism>
    <name type="scientific">Vibrio cholerae serotype O1 (strain M66-2)</name>
    <dbReference type="NCBI Taxonomy" id="579112"/>
    <lineage>
        <taxon>Bacteria</taxon>
        <taxon>Pseudomonadati</taxon>
        <taxon>Pseudomonadota</taxon>
        <taxon>Gammaproteobacteria</taxon>
        <taxon>Vibrionales</taxon>
        <taxon>Vibrionaceae</taxon>
        <taxon>Vibrio</taxon>
    </lineage>
</organism>
<evidence type="ECO:0000255" key="1">
    <source>
        <dbReference type="HAMAP-Rule" id="MF_01416"/>
    </source>
</evidence>
<feature type="chain" id="PRO_1000184827" description="ATP synthase subunit delta">
    <location>
        <begin position="1"/>
        <end position="177"/>
    </location>
</feature>
<proteinExistence type="inferred from homology"/>
<name>ATPD_VIBCM</name>
<accession>C3LSJ2</accession>
<sequence>MSDLTTIARPYAKAAFDFAVEKQQLGHWSQMLAFTAEVAKNEQMHELLTSSGSANKLAEIFIAVCGEQLDGHGQNLIKVMAENGRLLAIPALYEHFAVLKQEHEKKVDVEVISATELSEQQRSEIGSKLEQRLERKVQLNCSVDETLLGGVIIRAGDLVIDNSARGRLKRLSDALQS</sequence>